<comment type="function">
    <text evidence="1">Catalyzes the desulfonation of aliphatic sulfonates.</text>
</comment>
<comment type="catalytic activity">
    <reaction evidence="1">
        <text>an alkanesulfonate + FMNH2 + O2 = an aldehyde + FMN + sulfite + H2O + 2 H(+)</text>
        <dbReference type="Rhea" id="RHEA:23064"/>
        <dbReference type="ChEBI" id="CHEBI:15377"/>
        <dbReference type="ChEBI" id="CHEBI:15378"/>
        <dbReference type="ChEBI" id="CHEBI:15379"/>
        <dbReference type="ChEBI" id="CHEBI:17359"/>
        <dbReference type="ChEBI" id="CHEBI:17478"/>
        <dbReference type="ChEBI" id="CHEBI:57618"/>
        <dbReference type="ChEBI" id="CHEBI:58210"/>
        <dbReference type="ChEBI" id="CHEBI:134249"/>
        <dbReference type="EC" id="1.14.14.5"/>
    </reaction>
</comment>
<comment type="subunit">
    <text evidence="1">Homotetramer.</text>
</comment>
<comment type="miscellaneous">
    <text evidence="1">FMNH(2) which is absolutely required for this enzymatic reaction, is provided by SsuE.</text>
</comment>
<comment type="similarity">
    <text evidence="1">Belongs to the SsuD family.</text>
</comment>
<reference key="1">
    <citation type="journal article" date="2006" name="J. Bacteriol.">
        <title>Complete genome sequence of Yersinia pestis strains Antiqua and Nepal516: evidence of gene reduction in an emerging pathogen.</title>
        <authorList>
            <person name="Chain P.S.G."/>
            <person name="Hu P."/>
            <person name="Malfatti S.A."/>
            <person name="Radnedge L."/>
            <person name="Larimer F."/>
            <person name="Vergez L.M."/>
            <person name="Worsham P."/>
            <person name="Chu M.C."/>
            <person name="Andersen G.L."/>
        </authorList>
    </citation>
    <scope>NUCLEOTIDE SEQUENCE [LARGE SCALE GENOMIC DNA]</scope>
    <source>
        <strain>Antiqua</strain>
    </source>
</reference>
<organism>
    <name type="scientific">Yersinia pestis bv. Antiqua (strain Antiqua)</name>
    <dbReference type="NCBI Taxonomy" id="360102"/>
    <lineage>
        <taxon>Bacteria</taxon>
        <taxon>Pseudomonadati</taxon>
        <taxon>Pseudomonadota</taxon>
        <taxon>Gammaproteobacteria</taxon>
        <taxon>Enterobacterales</taxon>
        <taxon>Yersiniaceae</taxon>
        <taxon>Yersinia</taxon>
    </lineage>
</organism>
<sequence>MSINVFWFLPTHGDGHYLGSSEGARAVDYSYLQQIAQAADRLGFGGVLIPTGRSCEDSWLVAASLIPVTQRLKFLVALRPGIISPTLAARQAATLDRLSNGRALFNLVTGGDPEELAAEGLHLNHTERYEASAEFTHVWRKVLEGETVDFAGKHIQVKGAKLLFPPVQHPRPPLYFGGSSAAAQDLAAEQVELYLTWGEPPEQVKEKIEEVRAKAAAKGRTVRFGIRLHVIVRETTEEAWRAANRLIANLDDKTIADAQQAFAGFDSVGQQRMAALHGGKKDNLEISPNLWAGVGLVRGGAGTALVGDGPTVAQRIQEYADLGIDTFVFSGYPHLEEAYRVSELLFPHLDLATTELPTQRPATQPQGEVVANIYVPQKVSQS</sequence>
<name>SSUD_YERPA</name>
<protein>
    <recommendedName>
        <fullName evidence="1">Alkanesulfonate monooxygenase</fullName>
        <ecNumber evidence="1">1.14.14.5</ecNumber>
    </recommendedName>
    <alternativeName>
        <fullName evidence="1">FMNH2-dependent aliphatic sulfonate monooxygenase</fullName>
    </alternativeName>
</protein>
<keyword id="KW-0285">Flavoprotein</keyword>
<keyword id="KW-0288">FMN</keyword>
<keyword id="KW-0503">Monooxygenase</keyword>
<keyword id="KW-0560">Oxidoreductase</keyword>
<accession>Q1C1S2</accession>
<dbReference type="EC" id="1.14.14.5" evidence="1"/>
<dbReference type="EMBL" id="CP000308">
    <property type="protein sequence ID" value="ABG15600.1"/>
    <property type="molecule type" value="Genomic_DNA"/>
</dbReference>
<dbReference type="RefSeq" id="WP_002210034.1">
    <property type="nucleotide sequence ID" value="NZ_CP009906.1"/>
</dbReference>
<dbReference type="SMR" id="Q1C1S2"/>
<dbReference type="GeneID" id="57975051"/>
<dbReference type="KEGG" id="ypa:YPA_3638"/>
<dbReference type="Proteomes" id="UP000001971">
    <property type="component" value="Chromosome"/>
</dbReference>
<dbReference type="GO" id="GO:0008726">
    <property type="term" value="F:alkanesulfonate monooxygenase activity"/>
    <property type="evidence" value="ECO:0007669"/>
    <property type="project" value="UniProtKB-UniRule"/>
</dbReference>
<dbReference type="GO" id="GO:0046306">
    <property type="term" value="P:alkanesulfonate catabolic process"/>
    <property type="evidence" value="ECO:0007669"/>
    <property type="project" value="TreeGrafter"/>
</dbReference>
<dbReference type="CDD" id="cd01094">
    <property type="entry name" value="Alkanesulfonate_monoxygenase"/>
    <property type="match status" value="1"/>
</dbReference>
<dbReference type="FunFam" id="3.20.20.30:FF:000001">
    <property type="entry name" value="Alkanesulfonate monooxygenase"/>
    <property type="match status" value="1"/>
</dbReference>
<dbReference type="Gene3D" id="3.20.20.30">
    <property type="entry name" value="Luciferase-like domain"/>
    <property type="match status" value="1"/>
</dbReference>
<dbReference type="HAMAP" id="MF_01229">
    <property type="entry name" value="Alkanesulf_monooxygen"/>
    <property type="match status" value="1"/>
</dbReference>
<dbReference type="InterPro" id="IPR019911">
    <property type="entry name" value="Alkanesulphonate_mOase_FMN-dep"/>
</dbReference>
<dbReference type="InterPro" id="IPR011251">
    <property type="entry name" value="Luciferase-like_dom"/>
</dbReference>
<dbReference type="InterPro" id="IPR036661">
    <property type="entry name" value="Luciferase-like_sf"/>
</dbReference>
<dbReference type="InterPro" id="IPR050172">
    <property type="entry name" value="SsuD_RutA_monooxygenase"/>
</dbReference>
<dbReference type="NCBIfam" id="TIGR03565">
    <property type="entry name" value="alk_sulf_monoox"/>
    <property type="match status" value="1"/>
</dbReference>
<dbReference type="NCBIfam" id="NF001939">
    <property type="entry name" value="PRK00719.1"/>
    <property type="match status" value="1"/>
</dbReference>
<dbReference type="PANTHER" id="PTHR42847">
    <property type="entry name" value="ALKANESULFONATE MONOOXYGENASE"/>
    <property type="match status" value="1"/>
</dbReference>
<dbReference type="PANTHER" id="PTHR42847:SF4">
    <property type="entry name" value="ALKANESULFONATE MONOOXYGENASE-RELATED"/>
    <property type="match status" value="1"/>
</dbReference>
<dbReference type="Pfam" id="PF00296">
    <property type="entry name" value="Bac_luciferase"/>
    <property type="match status" value="1"/>
</dbReference>
<dbReference type="SUPFAM" id="SSF51679">
    <property type="entry name" value="Bacterial luciferase-like"/>
    <property type="match status" value="1"/>
</dbReference>
<proteinExistence type="inferred from homology"/>
<feature type="chain" id="PRO_1000066838" description="Alkanesulfonate monooxygenase">
    <location>
        <begin position="1"/>
        <end position="382"/>
    </location>
</feature>
<gene>
    <name evidence="1" type="primary">ssuD</name>
    <name type="ordered locus">YPA_3638</name>
</gene>
<evidence type="ECO:0000255" key="1">
    <source>
        <dbReference type="HAMAP-Rule" id="MF_01229"/>
    </source>
</evidence>